<feature type="chain" id="PRO_0000394787" description="UPF0763 protein HPKB_0680">
    <location>
        <begin position="1"/>
        <end position="171"/>
    </location>
</feature>
<reference key="1">
    <citation type="submission" date="2009-07" db="EMBL/GenBank/DDBJ databases">
        <title>Genome sequence of Helicobacter pylori strain 52.</title>
        <authorList>
            <person name="Kim S."/>
            <person name="Lee W.K."/>
            <person name="Choi S.H."/>
            <person name="Kang S."/>
            <person name="Park H.S."/>
            <person name="Kim Y.S."/>
            <person name="Lee S.G."/>
            <person name="Byun E.Y."/>
            <person name="Jeong J.E."/>
            <person name="Park Y.H."/>
            <person name="Lee E.J."/>
            <person name="Kim J.S."/>
            <person name="Ryu B.D."/>
            <person name="Lee Y.S."/>
            <person name="Hahn Y."/>
            <person name="Yeom Y.I."/>
            <person name="Park S.G."/>
            <person name="Youn H.S."/>
            <person name="Ko G.H."/>
            <person name="Choi M.B."/>
            <person name="Park C.H."/>
            <person name="Lim J.Y."/>
            <person name="Bae D.W."/>
            <person name="Song J.Y."/>
            <person name="Park J.U."/>
            <person name="Kang H.L."/>
            <person name="Baik S.C."/>
            <person name="Cho M.J."/>
            <person name="Yoo H.S."/>
            <person name="Rhee K.H."/>
        </authorList>
    </citation>
    <scope>NUCLEOTIDE SEQUENCE [LARGE SCALE GENOMIC DNA]</scope>
    <source>
        <strain>52</strain>
    </source>
</reference>
<sequence>MEKLPKKRVSKTKSQKLINSLTTQKNRAFLKKISASEMLLELEKGAFKKNEAYFISDEEDKNYVLVPDNVISLLAENARKAFEARLRAELERDIITQAPIDFEDVREVSLQLLENLRQKDGNLPNINTLNFVKQIKKEHPNLFFNFDNMFKQPPFNENNFENFDNSDEENF</sequence>
<accession>D0JZK4</accession>
<comment type="similarity">
    <text evidence="1">Belongs to the UPF0763 family.</text>
</comment>
<dbReference type="EMBL" id="CP001680">
    <property type="protein sequence ID" value="ACX99274.1"/>
    <property type="molecule type" value="Genomic_DNA"/>
</dbReference>
<dbReference type="RefSeq" id="WP_000413482.1">
    <property type="nucleotide sequence ID" value="NC_017354.1"/>
</dbReference>
<dbReference type="KEGG" id="hpz:HPKB_0680"/>
<dbReference type="PATRIC" id="fig|684950.4.peg.726"/>
<dbReference type="HOGENOM" id="CLU_120359_0_0_7"/>
<dbReference type="HAMAP" id="MF_02110">
    <property type="entry name" value="UPF0763"/>
    <property type="match status" value="1"/>
</dbReference>
<dbReference type="InterPro" id="IPR019724">
    <property type="entry name" value="UPF0763"/>
</dbReference>
<dbReference type="Pfam" id="PF10788">
    <property type="entry name" value="DUF2603"/>
    <property type="match status" value="1"/>
</dbReference>
<proteinExistence type="inferred from homology"/>
<name>Y680_HELP5</name>
<protein>
    <recommendedName>
        <fullName evidence="1">UPF0763 protein HPKB_0680</fullName>
    </recommendedName>
</protein>
<evidence type="ECO:0000255" key="1">
    <source>
        <dbReference type="HAMAP-Rule" id="MF_02110"/>
    </source>
</evidence>
<organism>
    <name type="scientific">Helicobacter pylori (strain 52)</name>
    <dbReference type="NCBI Taxonomy" id="684950"/>
    <lineage>
        <taxon>Bacteria</taxon>
        <taxon>Pseudomonadati</taxon>
        <taxon>Campylobacterota</taxon>
        <taxon>Epsilonproteobacteria</taxon>
        <taxon>Campylobacterales</taxon>
        <taxon>Helicobacteraceae</taxon>
        <taxon>Helicobacter</taxon>
    </lineage>
</organism>
<gene>
    <name type="ordered locus">HPKB_0680</name>
</gene>